<accession>A8MLP2</accession>
<dbReference type="EC" id="2.1.3.15" evidence="1"/>
<dbReference type="EMBL" id="CP000853">
    <property type="protein sequence ID" value="ABW17959.1"/>
    <property type="molecule type" value="Genomic_DNA"/>
</dbReference>
<dbReference type="RefSeq" id="WP_012158274.1">
    <property type="nucleotide sequence ID" value="NC_009922.1"/>
</dbReference>
<dbReference type="SMR" id="A8MLP2"/>
<dbReference type="STRING" id="350688.Clos_0397"/>
<dbReference type="KEGG" id="aoe:Clos_0397"/>
<dbReference type="eggNOG" id="COG0825">
    <property type="taxonomic scope" value="Bacteria"/>
</dbReference>
<dbReference type="HOGENOM" id="CLU_015486_0_2_9"/>
<dbReference type="OrthoDB" id="9808023at2"/>
<dbReference type="UniPathway" id="UPA00655">
    <property type="reaction ID" value="UER00711"/>
</dbReference>
<dbReference type="Proteomes" id="UP000000269">
    <property type="component" value="Chromosome"/>
</dbReference>
<dbReference type="GO" id="GO:0009317">
    <property type="term" value="C:acetyl-CoA carboxylase complex"/>
    <property type="evidence" value="ECO:0007669"/>
    <property type="project" value="InterPro"/>
</dbReference>
<dbReference type="GO" id="GO:0003989">
    <property type="term" value="F:acetyl-CoA carboxylase activity"/>
    <property type="evidence" value="ECO:0007669"/>
    <property type="project" value="InterPro"/>
</dbReference>
<dbReference type="GO" id="GO:0005524">
    <property type="term" value="F:ATP binding"/>
    <property type="evidence" value="ECO:0007669"/>
    <property type="project" value="UniProtKB-KW"/>
</dbReference>
<dbReference type="GO" id="GO:0016743">
    <property type="term" value="F:carboxyl- or carbamoyltransferase activity"/>
    <property type="evidence" value="ECO:0007669"/>
    <property type="project" value="UniProtKB-UniRule"/>
</dbReference>
<dbReference type="GO" id="GO:0006633">
    <property type="term" value="P:fatty acid biosynthetic process"/>
    <property type="evidence" value="ECO:0007669"/>
    <property type="project" value="UniProtKB-KW"/>
</dbReference>
<dbReference type="GO" id="GO:2001295">
    <property type="term" value="P:malonyl-CoA biosynthetic process"/>
    <property type="evidence" value="ECO:0007669"/>
    <property type="project" value="UniProtKB-UniRule"/>
</dbReference>
<dbReference type="Gene3D" id="3.90.226.10">
    <property type="entry name" value="2-enoyl-CoA Hydratase, Chain A, domain 1"/>
    <property type="match status" value="1"/>
</dbReference>
<dbReference type="HAMAP" id="MF_00823">
    <property type="entry name" value="AcetylCoA_CT_alpha"/>
    <property type="match status" value="1"/>
</dbReference>
<dbReference type="InterPro" id="IPR001095">
    <property type="entry name" value="Acetyl_CoA_COase_a_su"/>
</dbReference>
<dbReference type="InterPro" id="IPR029045">
    <property type="entry name" value="ClpP/crotonase-like_dom_sf"/>
</dbReference>
<dbReference type="InterPro" id="IPR011763">
    <property type="entry name" value="COA_CT_C"/>
</dbReference>
<dbReference type="NCBIfam" id="TIGR00513">
    <property type="entry name" value="accA"/>
    <property type="match status" value="1"/>
</dbReference>
<dbReference type="NCBIfam" id="NF041504">
    <property type="entry name" value="AccA_sub"/>
    <property type="match status" value="1"/>
</dbReference>
<dbReference type="NCBIfam" id="NF004344">
    <property type="entry name" value="PRK05724.1"/>
    <property type="match status" value="1"/>
</dbReference>
<dbReference type="PANTHER" id="PTHR42853">
    <property type="entry name" value="ACETYL-COENZYME A CARBOXYLASE CARBOXYL TRANSFERASE SUBUNIT ALPHA"/>
    <property type="match status" value="1"/>
</dbReference>
<dbReference type="PANTHER" id="PTHR42853:SF3">
    <property type="entry name" value="ACETYL-COENZYME A CARBOXYLASE CARBOXYL TRANSFERASE SUBUNIT ALPHA, CHLOROPLASTIC"/>
    <property type="match status" value="1"/>
</dbReference>
<dbReference type="Pfam" id="PF03255">
    <property type="entry name" value="ACCA"/>
    <property type="match status" value="1"/>
</dbReference>
<dbReference type="PRINTS" id="PR01069">
    <property type="entry name" value="ACCCTRFRASEA"/>
</dbReference>
<dbReference type="SUPFAM" id="SSF52096">
    <property type="entry name" value="ClpP/crotonase"/>
    <property type="match status" value="1"/>
</dbReference>
<dbReference type="PROSITE" id="PS50989">
    <property type="entry name" value="COA_CT_CTER"/>
    <property type="match status" value="1"/>
</dbReference>
<proteinExistence type="inferred from homology"/>
<feature type="chain" id="PRO_1000148729" description="Acetyl-coenzyme A carboxylase carboxyl transferase subunit alpha">
    <location>
        <begin position="1"/>
        <end position="316"/>
    </location>
</feature>
<feature type="domain" description="CoA carboxyltransferase C-terminal" evidence="2">
    <location>
        <begin position="35"/>
        <end position="292"/>
    </location>
</feature>
<comment type="function">
    <text evidence="1">Component of the acetyl coenzyme A carboxylase (ACC) complex. First, biotin carboxylase catalyzes the carboxylation of biotin on its carrier protein (BCCP) and then the CO(2) group is transferred by the carboxyltransferase to acetyl-CoA to form malonyl-CoA.</text>
</comment>
<comment type="catalytic activity">
    <reaction evidence="1">
        <text>N(6)-carboxybiotinyl-L-lysyl-[protein] + acetyl-CoA = N(6)-biotinyl-L-lysyl-[protein] + malonyl-CoA</text>
        <dbReference type="Rhea" id="RHEA:54728"/>
        <dbReference type="Rhea" id="RHEA-COMP:10505"/>
        <dbReference type="Rhea" id="RHEA-COMP:10506"/>
        <dbReference type="ChEBI" id="CHEBI:57288"/>
        <dbReference type="ChEBI" id="CHEBI:57384"/>
        <dbReference type="ChEBI" id="CHEBI:83144"/>
        <dbReference type="ChEBI" id="CHEBI:83145"/>
        <dbReference type="EC" id="2.1.3.15"/>
    </reaction>
</comment>
<comment type="pathway">
    <text evidence="1">Lipid metabolism; malonyl-CoA biosynthesis; malonyl-CoA from acetyl-CoA: step 1/1.</text>
</comment>
<comment type="subunit">
    <text evidence="1">Acetyl-CoA carboxylase is a heterohexamer composed of biotin carboxyl carrier protein (AccB), biotin carboxylase (AccC) and two subunits each of ACCase subunit alpha (AccA) and ACCase subunit beta (AccD).</text>
</comment>
<comment type="subcellular location">
    <subcellularLocation>
        <location evidence="1">Cytoplasm</location>
    </subcellularLocation>
</comment>
<comment type="similarity">
    <text evidence="1">Belongs to the AccA family.</text>
</comment>
<sequence length="316" mass="35590">MHNFLESEKAIHELEGKIIELINFADKNKVDLTYEIEILSQKLEQMQKEMYENLNPWSKVKLARLQERPTTLDYIEKLISGFTEFHGDRFYGDDTAIVGGIGLFEGIPVTVIGHQKGKDTKDNIRRNFGMPHPEGYRKALRLMKQAEKFKRPILTFIDTSGAYCGIGAEERGQGEAIAVNLIEMSKLKTPIIAIVIGEGGSGGALALGIGDRVCMLEHSIYSVISPEGLSTILWKDATLAQRAADMMQLTAQDLWSMKVIDQVIKEPLGGAHKNADLVADQIKTYVLQELKDLRMLKTEELLEKRYTKIRNIGIWK</sequence>
<protein>
    <recommendedName>
        <fullName evidence="1">Acetyl-coenzyme A carboxylase carboxyl transferase subunit alpha</fullName>
        <shortName evidence="1">ACCase subunit alpha</shortName>
        <shortName evidence="1">Acetyl-CoA carboxylase carboxyltransferase subunit alpha</shortName>
        <ecNumber evidence="1">2.1.3.15</ecNumber>
    </recommendedName>
</protein>
<keyword id="KW-0067">ATP-binding</keyword>
<keyword id="KW-0963">Cytoplasm</keyword>
<keyword id="KW-0275">Fatty acid biosynthesis</keyword>
<keyword id="KW-0276">Fatty acid metabolism</keyword>
<keyword id="KW-0444">Lipid biosynthesis</keyword>
<keyword id="KW-0443">Lipid metabolism</keyword>
<keyword id="KW-0547">Nucleotide-binding</keyword>
<keyword id="KW-1185">Reference proteome</keyword>
<keyword id="KW-0808">Transferase</keyword>
<gene>
    <name evidence="1" type="primary">accA</name>
    <name type="ordered locus">Clos_0397</name>
</gene>
<evidence type="ECO:0000255" key="1">
    <source>
        <dbReference type="HAMAP-Rule" id="MF_00823"/>
    </source>
</evidence>
<evidence type="ECO:0000255" key="2">
    <source>
        <dbReference type="PROSITE-ProRule" id="PRU01137"/>
    </source>
</evidence>
<name>ACCA_ALKOO</name>
<organism>
    <name type="scientific">Alkaliphilus oremlandii (strain OhILAs)</name>
    <name type="common">Clostridium oremlandii (strain OhILAs)</name>
    <dbReference type="NCBI Taxonomy" id="350688"/>
    <lineage>
        <taxon>Bacteria</taxon>
        <taxon>Bacillati</taxon>
        <taxon>Bacillota</taxon>
        <taxon>Clostridia</taxon>
        <taxon>Peptostreptococcales</taxon>
        <taxon>Natronincolaceae</taxon>
        <taxon>Alkaliphilus</taxon>
    </lineage>
</organism>
<reference key="1">
    <citation type="submission" date="2007-10" db="EMBL/GenBank/DDBJ databases">
        <title>Complete genome of Alkaliphilus oremlandii OhILAs.</title>
        <authorList>
            <person name="Copeland A."/>
            <person name="Lucas S."/>
            <person name="Lapidus A."/>
            <person name="Barry K."/>
            <person name="Detter J.C."/>
            <person name="Glavina del Rio T."/>
            <person name="Hammon N."/>
            <person name="Israni S."/>
            <person name="Dalin E."/>
            <person name="Tice H."/>
            <person name="Pitluck S."/>
            <person name="Chain P."/>
            <person name="Malfatti S."/>
            <person name="Shin M."/>
            <person name="Vergez L."/>
            <person name="Schmutz J."/>
            <person name="Larimer F."/>
            <person name="Land M."/>
            <person name="Hauser L."/>
            <person name="Kyrpides N."/>
            <person name="Mikhailova N."/>
            <person name="Stolz J.F."/>
            <person name="Dawson A."/>
            <person name="Fisher E."/>
            <person name="Crable B."/>
            <person name="Perera E."/>
            <person name="Lisak J."/>
            <person name="Ranganathan M."/>
            <person name="Basu P."/>
            <person name="Richardson P."/>
        </authorList>
    </citation>
    <scope>NUCLEOTIDE SEQUENCE [LARGE SCALE GENOMIC DNA]</scope>
    <source>
        <strain>OhILAs</strain>
    </source>
</reference>